<feature type="chain" id="PRO_0000345994" description="Protoheme IX farnesyltransferase">
    <location>
        <begin position="1"/>
        <end position="296"/>
    </location>
</feature>
<feature type="topological domain" description="Cytoplasmic" evidence="1">
    <location>
        <begin position="1"/>
        <end position="9"/>
    </location>
</feature>
<feature type="transmembrane region" description="Helical" evidence="1">
    <location>
        <begin position="10"/>
        <end position="28"/>
    </location>
</feature>
<feature type="topological domain" description="Periplasmic" evidence="1">
    <location>
        <begin position="29"/>
        <end position="37"/>
    </location>
</feature>
<feature type="transmembrane region" description="Helical" evidence="1">
    <location>
        <begin position="38"/>
        <end position="56"/>
    </location>
</feature>
<feature type="topological domain" description="Cytoplasmic" evidence="1">
    <location>
        <begin position="57"/>
        <end position="78"/>
    </location>
</feature>
<feature type="transmembrane region" description="Helical" evidence="1">
    <location>
        <begin position="79"/>
        <end position="97"/>
    </location>
</feature>
<feature type="topological domain" description="Periplasmic" evidence="1">
    <location>
        <begin position="98"/>
        <end position="107"/>
    </location>
</feature>
<feature type="transmembrane region" description="Helical" evidence="1">
    <location>
        <begin position="108"/>
        <end position="126"/>
    </location>
</feature>
<feature type="topological domain" description="Cytoplasmic" evidence="1">
    <location>
        <begin position="127"/>
        <end position="197"/>
    </location>
</feature>
<feature type="transmembrane region" description="Helical" evidence="1">
    <location>
        <begin position="198"/>
        <end position="216"/>
    </location>
</feature>
<feature type="topological domain" description="Periplasmic" evidence="1">
    <location>
        <begin position="217"/>
        <end position="228"/>
    </location>
</feature>
<feature type="transmembrane region" description="Helical" evidence="1">
    <location>
        <begin position="229"/>
        <end position="247"/>
    </location>
</feature>
<feature type="topological domain" description="Cytoplasmic" evidence="1">
    <location>
        <begin position="248"/>
        <end position="268"/>
    </location>
</feature>
<feature type="transmembrane region" description="Helical" evidence="1">
    <location>
        <begin position="269"/>
        <end position="287"/>
    </location>
</feature>
<feature type="topological domain" description="Periplasmic" evidence="1">
    <location>
        <begin position="288"/>
        <end position="296"/>
    </location>
</feature>
<organism>
    <name type="scientific">Escherichia coli (strain ATCC 8739 / DSM 1576 / NBRC 3972 / NCIMB 8545 / WDCM 00012 / Crooks)</name>
    <dbReference type="NCBI Taxonomy" id="481805"/>
    <lineage>
        <taxon>Bacteria</taxon>
        <taxon>Pseudomonadati</taxon>
        <taxon>Pseudomonadota</taxon>
        <taxon>Gammaproteobacteria</taxon>
        <taxon>Enterobacterales</taxon>
        <taxon>Enterobacteriaceae</taxon>
        <taxon>Escherichia</taxon>
    </lineage>
</organism>
<accession>B1J021</accession>
<gene>
    <name evidence="1" type="primary">cyoE</name>
    <name type="ordered locus">EcolC_3205</name>
</gene>
<protein>
    <recommendedName>
        <fullName evidence="1">Protoheme IX farnesyltransferase</fullName>
        <ecNumber evidence="1">2.5.1.141</ecNumber>
    </recommendedName>
    <alternativeName>
        <fullName evidence="1">Heme B farnesyltransferase</fullName>
    </alternativeName>
    <alternativeName>
        <fullName evidence="1">Heme O synthase</fullName>
    </alternativeName>
</protein>
<reference key="1">
    <citation type="submission" date="2008-02" db="EMBL/GenBank/DDBJ databases">
        <title>Complete sequence of Escherichia coli C str. ATCC 8739.</title>
        <authorList>
            <person name="Copeland A."/>
            <person name="Lucas S."/>
            <person name="Lapidus A."/>
            <person name="Glavina del Rio T."/>
            <person name="Dalin E."/>
            <person name="Tice H."/>
            <person name="Bruce D."/>
            <person name="Goodwin L."/>
            <person name="Pitluck S."/>
            <person name="Kiss H."/>
            <person name="Brettin T."/>
            <person name="Detter J.C."/>
            <person name="Han C."/>
            <person name="Kuske C.R."/>
            <person name="Schmutz J."/>
            <person name="Larimer F."/>
            <person name="Land M."/>
            <person name="Hauser L."/>
            <person name="Kyrpides N."/>
            <person name="Mikhailova N."/>
            <person name="Ingram L."/>
            <person name="Richardson P."/>
        </authorList>
    </citation>
    <scope>NUCLEOTIDE SEQUENCE [LARGE SCALE GENOMIC DNA]</scope>
    <source>
        <strain>ATCC 8739 / DSM 1576 / NBRC 3972 / NCIMB 8545 / WDCM 00012 / Crooks</strain>
    </source>
</reference>
<name>CYOE_ECOLC</name>
<comment type="function">
    <text evidence="1">Converts heme B (protoheme IX) to heme O by substitution of the vinyl group on carbon 2 of heme B porphyrin ring with a hydroxyethyl farnesyl side group.</text>
</comment>
<comment type="catalytic activity">
    <reaction evidence="1">
        <text>heme b + (2E,6E)-farnesyl diphosphate + H2O = Fe(II)-heme o + diphosphate</text>
        <dbReference type="Rhea" id="RHEA:28070"/>
        <dbReference type="ChEBI" id="CHEBI:15377"/>
        <dbReference type="ChEBI" id="CHEBI:33019"/>
        <dbReference type="ChEBI" id="CHEBI:60344"/>
        <dbReference type="ChEBI" id="CHEBI:60530"/>
        <dbReference type="ChEBI" id="CHEBI:175763"/>
        <dbReference type="EC" id="2.5.1.141"/>
    </reaction>
</comment>
<comment type="pathway">
    <text evidence="1">Porphyrin-containing compound metabolism; heme O biosynthesis; heme O from protoheme: step 1/1.</text>
</comment>
<comment type="subcellular location">
    <subcellularLocation>
        <location evidence="1">Cell inner membrane</location>
        <topology evidence="1">Multi-pass membrane protein</topology>
    </subcellularLocation>
</comment>
<comment type="miscellaneous">
    <text evidence="1">Carbon 2 of the heme B porphyrin ring is defined according to the Fischer nomenclature.</text>
</comment>
<comment type="similarity">
    <text evidence="1">Belongs to the UbiA prenyltransferase family. Protoheme IX farnesyltransferase subfamily.</text>
</comment>
<proteinExistence type="inferred from homology"/>
<evidence type="ECO:0000255" key="1">
    <source>
        <dbReference type="HAMAP-Rule" id="MF_00154"/>
    </source>
</evidence>
<keyword id="KW-0997">Cell inner membrane</keyword>
<keyword id="KW-1003">Cell membrane</keyword>
<keyword id="KW-0350">Heme biosynthesis</keyword>
<keyword id="KW-0472">Membrane</keyword>
<keyword id="KW-0808">Transferase</keyword>
<keyword id="KW-0812">Transmembrane</keyword>
<keyword id="KW-1133">Transmembrane helix</keyword>
<sequence length="296" mass="32248">MMFKQYLQVTKPGIIFGNLISVIGGFLLASKGSIDYPLFIYTLVGVSLVVASGCVFNNYIDRDIDRKMERTKNRVLVKGLISPAVSLVYATLLGIAGFMLLWFGANPLACWLGVMGFVVYVGVYSLYMKRHSVYGTLIGSLSGAAPPVIGYCAVTGEFDSGAAILLAIFSLWQMPHSYAIAIFRFKDYQAANIPVLPVVKGISVAKNHITLYIIAFAVATLMLSLGGYAGYKYLVVAAAVSVWWLGMALRGYKVADDRIWARKLFGFSIIAITALSVMMSVDFMVPDSHTLLAAVW</sequence>
<dbReference type="EC" id="2.5.1.141" evidence="1"/>
<dbReference type="EMBL" id="CP000946">
    <property type="protein sequence ID" value="ACA78827.1"/>
    <property type="molecule type" value="Genomic_DNA"/>
</dbReference>
<dbReference type="RefSeq" id="WP_000971336.1">
    <property type="nucleotide sequence ID" value="NZ_MTFT01000010.1"/>
</dbReference>
<dbReference type="SMR" id="B1J021"/>
<dbReference type="GeneID" id="75202853"/>
<dbReference type="KEGG" id="ecl:EcolC_3205"/>
<dbReference type="HOGENOM" id="CLU_029631_0_0_6"/>
<dbReference type="UniPathway" id="UPA00834">
    <property type="reaction ID" value="UER00712"/>
</dbReference>
<dbReference type="GO" id="GO:0005886">
    <property type="term" value="C:plasma membrane"/>
    <property type="evidence" value="ECO:0007669"/>
    <property type="project" value="UniProtKB-SubCell"/>
</dbReference>
<dbReference type="GO" id="GO:0008495">
    <property type="term" value="F:protoheme IX farnesyltransferase activity"/>
    <property type="evidence" value="ECO:0007669"/>
    <property type="project" value="UniProtKB-UniRule"/>
</dbReference>
<dbReference type="GO" id="GO:0048034">
    <property type="term" value="P:heme O biosynthetic process"/>
    <property type="evidence" value="ECO:0007669"/>
    <property type="project" value="UniProtKB-UniRule"/>
</dbReference>
<dbReference type="CDD" id="cd13957">
    <property type="entry name" value="PT_UbiA_Cox10"/>
    <property type="match status" value="1"/>
</dbReference>
<dbReference type="FunFam" id="1.10.357.140:FF:000001">
    <property type="entry name" value="Protoheme IX farnesyltransferase"/>
    <property type="match status" value="1"/>
</dbReference>
<dbReference type="Gene3D" id="1.10.357.140">
    <property type="entry name" value="UbiA prenyltransferase"/>
    <property type="match status" value="1"/>
</dbReference>
<dbReference type="HAMAP" id="MF_00154">
    <property type="entry name" value="CyoE_CtaB"/>
    <property type="match status" value="1"/>
</dbReference>
<dbReference type="InterPro" id="IPR006369">
    <property type="entry name" value="Protohaem_IX_farnesylTrfase"/>
</dbReference>
<dbReference type="InterPro" id="IPR000537">
    <property type="entry name" value="UbiA_prenyltransferase"/>
</dbReference>
<dbReference type="InterPro" id="IPR030470">
    <property type="entry name" value="UbiA_prenylTrfase_CS"/>
</dbReference>
<dbReference type="InterPro" id="IPR044878">
    <property type="entry name" value="UbiA_sf"/>
</dbReference>
<dbReference type="NCBIfam" id="TIGR01473">
    <property type="entry name" value="cyoE_ctaB"/>
    <property type="match status" value="1"/>
</dbReference>
<dbReference type="NCBIfam" id="NF003348">
    <property type="entry name" value="PRK04375.1-1"/>
    <property type="match status" value="1"/>
</dbReference>
<dbReference type="PANTHER" id="PTHR43448">
    <property type="entry name" value="PROTOHEME IX FARNESYLTRANSFERASE, MITOCHONDRIAL"/>
    <property type="match status" value="1"/>
</dbReference>
<dbReference type="PANTHER" id="PTHR43448:SF2">
    <property type="entry name" value="PROTOHEME IX FARNESYLTRANSFERASE, MITOCHONDRIAL"/>
    <property type="match status" value="1"/>
</dbReference>
<dbReference type="Pfam" id="PF01040">
    <property type="entry name" value="UbiA"/>
    <property type="match status" value="1"/>
</dbReference>
<dbReference type="PROSITE" id="PS00943">
    <property type="entry name" value="UBIA"/>
    <property type="match status" value="1"/>
</dbReference>